<protein>
    <recommendedName>
        <fullName>Induced myeloid leukemia cell differentiation protein Mcl-1 homolog</fullName>
    </recommendedName>
</protein>
<reference key="1">
    <citation type="submission" date="2003-06" db="EMBL/GenBank/DDBJ databases">
        <title>Molecular cloning of feline bcl-2 family.</title>
        <authorList>
            <person name="Nagafuchi S."/>
            <person name="Sano J."/>
            <person name="Kano R."/>
            <person name="Hasegawa A."/>
        </authorList>
    </citation>
    <scope>NUCLEOTIDE SEQUENCE [MRNA]</scope>
</reference>
<sequence length="350" mass="36635">MFGLKRNAVIGLNLYCGGAGLAAGSGGASSSGGRLVAVGKEATARREVGGGEAGAVIGGSAGASPPATLAPDARRVARPSPIGAEGPDVTATPPKLLFFAATRCASPPEEMEGPAADAIMSPEEELDGYEPEPLGKRPAVLPLLELVGEASSGPGTDGSLPSTPPPAEEEEDELFRQSLEIISRYLREQATGAKDAKPLGGSGAASRKALETLRRVGDGVQRNHETAFQGMLRKLDIKNENDVKSLSRVMVHVFSDGVTNWGRIVTLISFGAFVAKHLKSINQESCIEPLAESITDVLVRTKRDWLVKQRGWDGFVEFFHVEDLEGGIRNVLLAFAGVAGVGAGLAYLIR</sequence>
<proteinExistence type="evidence at transcript level"/>
<organism>
    <name type="scientific">Felis catus</name>
    <name type="common">Cat</name>
    <name type="synonym">Felis silvestris catus</name>
    <dbReference type="NCBI Taxonomy" id="9685"/>
    <lineage>
        <taxon>Eukaryota</taxon>
        <taxon>Metazoa</taxon>
        <taxon>Chordata</taxon>
        <taxon>Craniata</taxon>
        <taxon>Vertebrata</taxon>
        <taxon>Euteleostomi</taxon>
        <taxon>Mammalia</taxon>
        <taxon>Eutheria</taxon>
        <taxon>Laurasiatheria</taxon>
        <taxon>Carnivora</taxon>
        <taxon>Feliformia</taxon>
        <taxon>Felidae</taxon>
        <taxon>Felinae</taxon>
        <taxon>Felis</taxon>
    </lineage>
</organism>
<keyword id="KW-0053">Apoptosis</keyword>
<keyword id="KW-0963">Cytoplasm</keyword>
<keyword id="KW-0217">Developmental protein</keyword>
<keyword id="KW-0221">Differentiation</keyword>
<keyword id="KW-1017">Isopeptide bond</keyword>
<keyword id="KW-0472">Membrane</keyword>
<keyword id="KW-0496">Mitochondrion</keyword>
<keyword id="KW-0539">Nucleus</keyword>
<keyword id="KW-0597">Phosphoprotein</keyword>
<keyword id="KW-1185">Reference proteome</keyword>
<keyword id="KW-0812">Transmembrane</keyword>
<keyword id="KW-1133">Transmembrane helix</keyword>
<keyword id="KW-0832">Ubl conjugation</keyword>
<accession>Q7YRZ9</accession>
<gene>
    <name type="primary">MCL1</name>
</gene>
<dbReference type="EMBL" id="AB112589">
    <property type="protein sequence ID" value="BAC77771.1"/>
    <property type="molecule type" value="mRNA"/>
</dbReference>
<dbReference type="RefSeq" id="NP_001009374.1">
    <property type="nucleotide sequence ID" value="NM_001009374.1"/>
</dbReference>
<dbReference type="SMR" id="Q7YRZ9"/>
<dbReference type="FunCoup" id="Q7YRZ9">
    <property type="interactions" value="18"/>
</dbReference>
<dbReference type="STRING" id="9685.ENSFCAP00000023698"/>
<dbReference type="PaxDb" id="9685-ENSFCAP00000023698"/>
<dbReference type="GeneID" id="493970"/>
<dbReference type="KEGG" id="fca:493970"/>
<dbReference type="CTD" id="4170"/>
<dbReference type="eggNOG" id="KOG4728">
    <property type="taxonomic scope" value="Eukaryota"/>
</dbReference>
<dbReference type="InParanoid" id="Q7YRZ9"/>
<dbReference type="OrthoDB" id="8932147at2759"/>
<dbReference type="TreeFam" id="TF315834"/>
<dbReference type="Proteomes" id="UP000011712">
    <property type="component" value="Unplaced"/>
</dbReference>
<dbReference type="GO" id="GO:0005829">
    <property type="term" value="C:cytosol"/>
    <property type="evidence" value="ECO:0000250"/>
    <property type="project" value="UniProtKB"/>
</dbReference>
<dbReference type="GO" id="GO:0016020">
    <property type="term" value="C:membrane"/>
    <property type="evidence" value="ECO:0000250"/>
    <property type="project" value="UniProtKB"/>
</dbReference>
<dbReference type="GO" id="GO:0005741">
    <property type="term" value="C:mitochondrial outer membrane"/>
    <property type="evidence" value="ECO:0000318"/>
    <property type="project" value="GO_Central"/>
</dbReference>
<dbReference type="GO" id="GO:0005654">
    <property type="term" value="C:nucleoplasm"/>
    <property type="evidence" value="ECO:0007669"/>
    <property type="project" value="UniProtKB-SubCell"/>
</dbReference>
<dbReference type="GO" id="GO:0015267">
    <property type="term" value="F:channel activity"/>
    <property type="evidence" value="ECO:0000318"/>
    <property type="project" value="GO_Central"/>
</dbReference>
<dbReference type="GO" id="GO:0030154">
    <property type="term" value="P:cell differentiation"/>
    <property type="evidence" value="ECO:0007669"/>
    <property type="project" value="UniProtKB-KW"/>
</dbReference>
<dbReference type="GO" id="GO:0097192">
    <property type="term" value="P:extrinsic apoptotic signaling pathway in absence of ligand"/>
    <property type="evidence" value="ECO:0000250"/>
    <property type="project" value="UniProtKB"/>
</dbReference>
<dbReference type="GO" id="GO:0008630">
    <property type="term" value="P:intrinsic apoptotic signaling pathway in response to DNA damage"/>
    <property type="evidence" value="ECO:0000318"/>
    <property type="project" value="GO_Central"/>
</dbReference>
<dbReference type="GO" id="GO:0008053">
    <property type="term" value="P:mitochondrial fusion"/>
    <property type="evidence" value="ECO:0000318"/>
    <property type="project" value="GO_Central"/>
</dbReference>
<dbReference type="GO" id="GO:0043525">
    <property type="term" value="P:positive regulation of neuron apoptotic process"/>
    <property type="evidence" value="ECO:0000318"/>
    <property type="project" value="GO_Central"/>
</dbReference>
<dbReference type="GO" id="GO:0001836">
    <property type="term" value="P:release of cytochrome c from mitochondria"/>
    <property type="evidence" value="ECO:0000318"/>
    <property type="project" value="GO_Central"/>
</dbReference>
<dbReference type="CDD" id="cd06845">
    <property type="entry name" value="Bcl-2_like"/>
    <property type="match status" value="1"/>
</dbReference>
<dbReference type="FunFam" id="1.10.437.10:FF:000002">
    <property type="entry name" value="Induced myeloid leukemia cell differentiation protein Mcl-1"/>
    <property type="match status" value="1"/>
</dbReference>
<dbReference type="Gene3D" id="1.10.437.10">
    <property type="entry name" value="Blc2-like"/>
    <property type="match status" value="1"/>
</dbReference>
<dbReference type="InterPro" id="IPR013281">
    <property type="entry name" value="Apop_reg_Mc1"/>
</dbReference>
<dbReference type="InterPro" id="IPR036834">
    <property type="entry name" value="Bcl-2-like_sf"/>
</dbReference>
<dbReference type="InterPro" id="IPR046371">
    <property type="entry name" value="Bcl-2_BH1-3"/>
</dbReference>
<dbReference type="InterPro" id="IPR026298">
    <property type="entry name" value="Bcl-2_fam"/>
</dbReference>
<dbReference type="InterPro" id="IPR002475">
    <property type="entry name" value="Bcl2-like"/>
</dbReference>
<dbReference type="InterPro" id="IPR020717">
    <property type="entry name" value="Bcl2_BH1_motif_CS"/>
</dbReference>
<dbReference type="InterPro" id="IPR020726">
    <property type="entry name" value="Bcl2_BH2_motif_CS"/>
</dbReference>
<dbReference type="InterPro" id="IPR020728">
    <property type="entry name" value="Bcl2_BH3_motif_CS"/>
</dbReference>
<dbReference type="PANTHER" id="PTHR11256">
    <property type="entry name" value="BCL-2 RELATED"/>
    <property type="match status" value="1"/>
</dbReference>
<dbReference type="PANTHER" id="PTHR11256:SF46">
    <property type="entry name" value="INDUCED MYELOID LEUKEMIA CELL DIFFERENTIATION PROTEIN MCL-1"/>
    <property type="match status" value="1"/>
</dbReference>
<dbReference type="Pfam" id="PF00452">
    <property type="entry name" value="Bcl-2"/>
    <property type="match status" value="1"/>
</dbReference>
<dbReference type="PRINTS" id="PR01866">
    <property type="entry name" value="APOPREGMCL1"/>
</dbReference>
<dbReference type="PRINTS" id="PR01862">
    <property type="entry name" value="BCL2FAMILY"/>
</dbReference>
<dbReference type="SMART" id="SM00337">
    <property type="entry name" value="BCL"/>
    <property type="match status" value="1"/>
</dbReference>
<dbReference type="SUPFAM" id="SSF56854">
    <property type="entry name" value="Bcl-2 inhibitors of programmed cell death"/>
    <property type="match status" value="1"/>
</dbReference>
<dbReference type="PROSITE" id="PS50062">
    <property type="entry name" value="BCL2_FAMILY"/>
    <property type="match status" value="1"/>
</dbReference>
<dbReference type="PROSITE" id="PS01080">
    <property type="entry name" value="BH1"/>
    <property type="match status" value="1"/>
</dbReference>
<dbReference type="PROSITE" id="PS01258">
    <property type="entry name" value="BH2"/>
    <property type="match status" value="1"/>
</dbReference>
<dbReference type="PROSITE" id="PS01259">
    <property type="entry name" value="BH3"/>
    <property type="match status" value="1"/>
</dbReference>
<comment type="function">
    <text evidence="1">Involved in the regulation of apoptosis versus cell survival, and in the maintenance of viability but not of proliferation. Mediates its effects by interactions with a number of other regulators of apoptosis (By similarity).</text>
</comment>
<comment type="subunit">
    <text evidence="2 3 4">Interacts with HIF3A (via C-terminus domain) (By similarity). Interacts with BOK, BIK, BAX, BAK1, and TPT1. Interacts with unphosphorylated BAD (By similarity). Interacts with BMF, BBC3 and PMAIP1 (By similarity). Interacts with BOP (By similarity). Interacts with BCL2L11; may sequester BCL2L11 to prevent its pro-apoptotic activity (By similarity). Interacts with GIMAP5 and HSPA8/HSC70; the interaction between HSPA8 and MCL1 is impaired in the absence of GIMAP5 (By similarity).</text>
</comment>
<comment type="subcellular location">
    <subcellularLocation>
        <location evidence="1">Membrane</location>
        <topology evidence="1">Single-pass membrane protein</topology>
    </subcellularLocation>
    <subcellularLocation>
        <location evidence="1">Cytoplasm</location>
    </subcellularLocation>
    <subcellularLocation>
        <location evidence="1">Mitochondrion</location>
    </subcellularLocation>
    <subcellularLocation>
        <location evidence="1">Nucleus</location>
        <location evidence="1">Nucleoplasm</location>
    </subcellularLocation>
    <text>Cytoplasmic, associated with mitochondria.</text>
</comment>
<comment type="PTM">
    <text evidence="1">Cleaved by CASP3 during apoptosis, yielding a pro-apoptotic C-terminal fragment.</text>
</comment>
<comment type="PTM">
    <text evidence="1">Rapidly degraded in the absence of phosphorylation in the PEST region.</text>
</comment>
<comment type="PTM">
    <text evidence="1">Phosphorylated on Ser-159, by GSK3, in response to IL3/interleukin-3 withdrawal. Phosphorylation at Ser-159 induces ubiquitination and proteasomal degradation, abrogating the anti-apoptotic activity. Treatment with taxol or okadaic acid induces phosphorylation on additional sites (By similarity).</text>
</comment>
<comment type="PTM">
    <text evidence="3">Ubiquitinated. Ubiquitination is induced by phosphorylation at Ser-159 (By similarity). Deubiquitinated by USP20; leading to increased stability.</text>
</comment>
<comment type="similarity">
    <text evidence="7">Belongs to the Bcl-2 family.</text>
</comment>
<evidence type="ECO:0000250" key="1"/>
<evidence type="ECO:0000250" key="2">
    <source>
        <dbReference type="UniProtKB" id="P97287"/>
    </source>
</evidence>
<evidence type="ECO:0000250" key="3">
    <source>
        <dbReference type="UniProtKB" id="Q07820"/>
    </source>
</evidence>
<evidence type="ECO:0000250" key="4">
    <source>
        <dbReference type="UniProtKB" id="Q9Z1P3"/>
    </source>
</evidence>
<evidence type="ECO:0000255" key="5"/>
<evidence type="ECO:0000256" key="6">
    <source>
        <dbReference type="SAM" id="MobiDB-lite"/>
    </source>
</evidence>
<evidence type="ECO:0000305" key="7"/>
<name>MCL1_FELCA</name>
<feature type="chain" id="PRO_0000143079" description="Induced myeloid leukemia cell differentiation protein Mcl-1 homolog">
    <location>
        <begin position="1"/>
        <end position="350"/>
    </location>
</feature>
<feature type="transmembrane region" description="Helical" evidence="5">
    <location>
        <begin position="328"/>
        <end position="348"/>
    </location>
</feature>
<feature type="region of interest" description="PEST-like" evidence="1">
    <location>
        <begin position="104"/>
        <end position="175"/>
    </location>
</feature>
<feature type="region of interest" description="Disordered" evidence="6">
    <location>
        <begin position="148"/>
        <end position="170"/>
    </location>
</feature>
<feature type="short sequence motif" description="BH3">
    <location>
        <begin position="209"/>
        <end position="223"/>
    </location>
</feature>
<feature type="short sequence motif" description="BH1">
    <location>
        <begin position="252"/>
        <end position="272"/>
    </location>
</feature>
<feature type="short sequence motif" description="BH2">
    <location>
        <begin position="304"/>
        <end position="319"/>
    </location>
</feature>
<feature type="site" description="Cleavage; by caspase-3" evidence="1">
    <location>
        <begin position="127"/>
        <end position="128"/>
    </location>
</feature>
<feature type="site" description="Cleavage; by caspase-3" evidence="1">
    <location>
        <begin position="157"/>
        <end position="158"/>
    </location>
</feature>
<feature type="modified residue" description="Phosphoserine" evidence="3">
    <location>
        <position position="121"/>
    </location>
</feature>
<feature type="modified residue" description="Phosphoserine; by GSK3-alpha and GSK3-beta" evidence="3">
    <location>
        <position position="159"/>
    </location>
</feature>
<feature type="modified residue" description="Phosphoserine" evidence="3">
    <location>
        <position position="162"/>
    </location>
</feature>
<feature type="modified residue" description="Phosphothreonine; by MAPK" evidence="3">
    <location>
        <position position="163"/>
    </location>
</feature>
<feature type="cross-link" description="Glycyl lysine isopeptide (Lys-Gly) (interchain with G-Cter in ubiquitin)" evidence="3">
    <location>
        <position position="5"/>
    </location>
</feature>
<feature type="cross-link" description="Glycyl lysine isopeptide (Lys-Gly) (interchain with G-Cter in ubiquitin)" evidence="3">
    <location>
        <position position="40"/>
    </location>
</feature>
<feature type="cross-link" description="Glycyl lysine isopeptide (Lys-Gly) (interchain with G-Cter in ubiquitin)" evidence="3">
    <location>
        <position position="136"/>
    </location>
</feature>
<feature type="cross-link" description="Glycyl lysine isopeptide (Lys-Gly) (interchain with G-Cter in ubiquitin)" evidence="3">
    <location>
        <position position="194"/>
    </location>
</feature>
<feature type="cross-link" description="Glycyl lysine isopeptide (Lys-Gly) (interchain with G-Cter in ubiquitin)" evidence="3">
    <location>
        <position position="197"/>
    </location>
</feature>